<gene>
    <name type="primary">cry2Ac</name>
    <name type="synonym">cryIIA(c)</name>
    <name type="synonym">cryIIc</name>
</gene>
<evidence type="ECO:0000305" key="1"/>
<protein>
    <recommendedName>
        <fullName>Pesticidal crystal protein Cry2Ac</fullName>
    </recommendedName>
    <alternativeName>
        <fullName>70 kDa crystal protein</fullName>
    </alternativeName>
    <alternativeName>
        <fullName>Crystaline entomocidal protoxin</fullName>
    </alternativeName>
    <alternativeName>
        <fullName>Insecticidal delta-endotoxin CryIIA(c)</fullName>
    </alternativeName>
</protein>
<dbReference type="EMBL" id="X57252">
    <property type="protein sequence ID" value="CAA40536.1"/>
    <property type="molecule type" value="Genomic_DNA"/>
</dbReference>
<dbReference type="PIR" id="S17402">
    <property type="entry name" value="S17402"/>
</dbReference>
<dbReference type="PIR" id="S42282">
    <property type="entry name" value="S42282"/>
</dbReference>
<dbReference type="SMR" id="Q45743"/>
<dbReference type="GO" id="GO:0005102">
    <property type="term" value="F:signaling receptor binding"/>
    <property type="evidence" value="ECO:0007669"/>
    <property type="project" value="InterPro"/>
</dbReference>
<dbReference type="GO" id="GO:0090729">
    <property type="term" value="F:toxin activity"/>
    <property type="evidence" value="ECO:0007669"/>
    <property type="project" value="UniProtKB-KW"/>
</dbReference>
<dbReference type="GO" id="GO:0030435">
    <property type="term" value="P:sporulation resulting in formation of a cellular spore"/>
    <property type="evidence" value="ECO:0007669"/>
    <property type="project" value="UniProtKB-KW"/>
</dbReference>
<dbReference type="GO" id="GO:0001907">
    <property type="term" value="P:symbiont-mediated killing of host cell"/>
    <property type="evidence" value="ECO:0007669"/>
    <property type="project" value="InterPro"/>
</dbReference>
<dbReference type="Gene3D" id="2.60.120.260">
    <property type="entry name" value="Galactose-binding domain-like"/>
    <property type="match status" value="1"/>
</dbReference>
<dbReference type="Gene3D" id="2.100.10.10">
    <property type="entry name" value="Pesticidal crystal protein, central domain"/>
    <property type="match status" value="1"/>
</dbReference>
<dbReference type="Gene3D" id="1.20.190.10">
    <property type="entry name" value="Pesticidal crystal protein, N-terminal domain"/>
    <property type="match status" value="1"/>
</dbReference>
<dbReference type="InterPro" id="IPR008979">
    <property type="entry name" value="Galactose-bd-like_sf"/>
</dbReference>
<dbReference type="InterPro" id="IPR005638">
    <property type="entry name" value="Pest_crys_dom-III"/>
</dbReference>
<dbReference type="InterPro" id="IPR005639">
    <property type="entry name" value="Pest_crys_dom_I"/>
</dbReference>
<dbReference type="InterPro" id="IPR036716">
    <property type="entry name" value="Pest_crys_N_sf"/>
</dbReference>
<dbReference type="InterPro" id="IPR015214">
    <property type="entry name" value="Pest_cryst_cen_dom_Cry2A/18"/>
</dbReference>
<dbReference type="InterPro" id="IPR036399">
    <property type="entry name" value="Pest_cryst_cen_dom_sf"/>
</dbReference>
<dbReference type="Pfam" id="PF03944">
    <property type="entry name" value="Endotoxin_C"/>
    <property type="match status" value="1"/>
</dbReference>
<dbReference type="Pfam" id="PF09131">
    <property type="entry name" value="Endotoxin_mid"/>
    <property type="match status" value="1"/>
</dbReference>
<dbReference type="Pfam" id="PF03945">
    <property type="entry name" value="Endotoxin_N"/>
    <property type="match status" value="1"/>
</dbReference>
<dbReference type="SUPFAM" id="SSF51096">
    <property type="entry name" value="delta-Endotoxin (insectocide), middle domain"/>
    <property type="match status" value="1"/>
</dbReference>
<dbReference type="SUPFAM" id="SSF56849">
    <property type="entry name" value="delta-Endotoxin (insectocide), N-terminal domain"/>
    <property type="match status" value="1"/>
</dbReference>
<dbReference type="SUPFAM" id="SSF49785">
    <property type="entry name" value="Galactose-binding domain-like"/>
    <property type="match status" value="1"/>
</dbReference>
<organism>
    <name type="scientific">Bacillus thuringiensis</name>
    <dbReference type="NCBI Taxonomy" id="1428"/>
    <lineage>
        <taxon>Bacteria</taxon>
        <taxon>Bacillati</taxon>
        <taxon>Bacillota</taxon>
        <taxon>Bacilli</taxon>
        <taxon>Bacillales</taxon>
        <taxon>Bacillaceae</taxon>
        <taxon>Bacillus</taxon>
        <taxon>Bacillus cereus group</taxon>
    </lineage>
</organism>
<accession>Q45743</accession>
<comment type="function">
    <text>Promotes colloidosmotic lysis by binding to the midgut epithelial cells of lepidopteran larvae. Has low activity on dipteran larvae.</text>
</comment>
<comment type="developmental stage">
    <text>The crystal protein is produced during sporulation and is accumulated both as an inclusion and as part of the spore coat.</text>
</comment>
<comment type="miscellaneous">
    <text>Toxic segment of the protein is located in the N-terminus.</text>
</comment>
<comment type="similarity">
    <text evidence="1">Belongs to the delta endotoxin family.</text>
</comment>
<feature type="chain" id="PRO_0000174058" description="Pesticidal crystal protein Cry2Ac">
    <location>
        <begin position="1"/>
        <end position="622"/>
    </location>
</feature>
<keyword id="KW-0749">Sporulation</keyword>
<keyword id="KW-0800">Toxin</keyword>
<keyword id="KW-0843">Virulence</keyword>
<reference key="1">
    <citation type="journal article" date="1991" name="FEMS Microbiol. Lett.">
        <title>Sequence of an operon containing a novel delta-endotoxin gene from Bacillus thuringiensis.</title>
        <authorList>
            <person name="Wu D."/>
            <person name="Cao X.L."/>
            <person name="Bai Y.Y."/>
            <person name="Aronson A.I."/>
        </authorList>
    </citation>
    <scope>NUCLEOTIDE SEQUENCE [GENOMIC DNA]</scope>
    <source>
        <strain>Shanghai 1 / S-1</strain>
    </source>
</reference>
<name>CR2AC_BACTU</name>
<proteinExistence type="evidence at transcript level"/>
<sequence>MNTVLNNGRNTTCHAHNVVAHDPFSFEHKSLNTIEKEWKEWKRTDHSLYVAPIVGTVGSFLLKKVGSLVGKRILSELQNLIFPSGSIDLMQEILRATEQFINQRLNADTLGRVNAELAGLQANVAEFNRQVDNFLNPNQNPVPLAIIDSVNTLQQLFLSRLPQFQIQGYQLLLLPLFAQAANFNLSFIRGVILNADEWGISAATVRTYRDHLRKFHRDYSNYCINPYQTAFRGLNHRLPDMLEFRTYMFLNVFEYVSIWSLFKYQSLLVSSGANLYASGSGPTQSFTAQNWPFLYSLFQVNSNYVLNGLSGARTTITFPNIGGLPVYHNSTLHFARINYRGGVSSSRIGQANLNQNFNISTLFNPLQTPFIRSWLDSGTDREGVATSTNWQSGAFETTLLRFSIFSARGNSNFFPDYFIRNISGVVGTISNADLARPLHFNEIRDIGTTAVASLVTVHNRKNNIYDTHENGTMIHLAPNDYTGFTVSPIHATQVNNQIRTFISEKYGNQGDSLRFELSNPTARYTLRGNGNSYNLYLRVSSIGSSTIRVTINGRVYTANVNTTTNNDGVLDNGARFSDINIGNVVASANTNVPLDIQVTFNGNPQFELMNIMFVPTNLPPLY</sequence>